<protein>
    <recommendedName>
        <fullName evidence="1">Methionine--tRNA ligase</fullName>
        <ecNumber evidence="1">6.1.1.10</ecNumber>
    </recommendedName>
    <alternativeName>
        <fullName evidence="1">Methionyl-tRNA synthetase</fullName>
        <shortName evidence="1">MetRS</shortName>
    </alternativeName>
</protein>
<gene>
    <name evidence="1" type="primary">metG</name>
    <name type="ordered locus">BTH_I0856</name>
</gene>
<accession>Q2T087</accession>
<name>SYM_BURTA</name>
<evidence type="ECO:0000255" key="1">
    <source>
        <dbReference type="HAMAP-Rule" id="MF_00098"/>
    </source>
</evidence>
<evidence type="ECO:0000305" key="2"/>
<comment type="function">
    <text evidence="1">Is required not only for elongation of protein synthesis but also for the initiation of all mRNA translation through initiator tRNA(fMet) aminoacylation.</text>
</comment>
<comment type="catalytic activity">
    <reaction evidence="1">
        <text>tRNA(Met) + L-methionine + ATP = L-methionyl-tRNA(Met) + AMP + diphosphate</text>
        <dbReference type="Rhea" id="RHEA:13481"/>
        <dbReference type="Rhea" id="RHEA-COMP:9667"/>
        <dbReference type="Rhea" id="RHEA-COMP:9698"/>
        <dbReference type="ChEBI" id="CHEBI:30616"/>
        <dbReference type="ChEBI" id="CHEBI:33019"/>
        <dbReference type="ChEBI" id="CHEBI:57844"/>
        <dbReference type="ChEBI" id="CHEBI:78442"/>
        <dbReference type="ChEBI" id="CHEBI:78530"/>
        <dbReference type="ChEBI" id="CHEBI:456215"/>
        <dbReference type="EC" id="6.1.1.10"/>
    </reaction>
</comment>
<comment type="cofactor">
    <cofactor evidence="1">
        <name>Zn(2+)</name>
        <dbReference type="ChEBI" id="CHEBI:29105"/>
    </cofactor>
    <text evidence="1">Binds 1 zinc ion per subunit.</text>
</comment>
<comment type="subunit">
    <text evidence="1">Homodimer.</text>
</comment>
<comment type="subcellular location">
    <subcellularLocation>
        <location evidence="1">Cytoplasm</location>
    </subcellularLocation>
</comment>
<comment type="similarity">
    <text evidence="1">Belongs to the class-I aminoacyl-tRNA synthetase family. MetG type 1 subfamily.</text>
</comment>
<comment type="sequence caution" evidence="2">
    <conflict type="erroneous initiation">
        <sequence resource="EMBL-CDS" id="ABC38961"/>
    </conflict>
</comment>
<proteinExistence type="inferred from homology"/>
<feature type="chain" id="PRO_0000331797" description="Methionine--tRNA ligase">
    <location>
        <begin position="1"/>
        <end position="718"/>
    </location>
</feature>
<feature type="domain" description="tRNA-binding" evidence="1">
    <location>
        <begin position="612"/>
        <end position="718"/>
    </location>
</feature>
<feature type="short sequence motif" description="'HIGH' region">
    <location>
        <begin position="27"/>
        <end position="37"/>
    </location>
</feature>
<feature type="short sequence motif" description="'KMSKS' region">
    <location>
        <begin position="348"/>
        <end position="352"/>
    </location>
</feature>
<feature type="binding site" evidence="1">
    <location>
        <position position="158"/>
    </location>
    <ligand>
        <name>Zn(2+)</name>
        <dbReference type="ChEBI" id="CHEBI:29105"/>
    </ligand>
</feature>
<feature type="binding site" evidence="1">
    <location>
        <position position="161"/>
    </location>
    <ligand>
        <name>Zn(2+)</name>
        <dbReference type="ChEBI" id="CHEBI:29105"/>
    </ligand>
</feature>
<feature type="binding site" evidence="1">
    <location>
        <position position="171"/>
    </location>
    <ligand>
        <name>Zn(2+)</name>
        <dbReference type="ChEBI" id="CHEBI:29105"/>
    </ligand>
</feature>
<feature type="binding site" evidence="1">
    <location>
        <position position="174"/>
    </location>
    <ligand>
        <name>Zn(2+)</name>
        <dbReference type="ChEBI" id="CHEBI:29105"/>
    </ligand>
</feature>
<feature type="binding site" evidence="1">
    <location>
        <position position="351"/>
    </location>
    <ligand>
        <name>ATP</name>
        <dbReference type="ChEBI" id="CHEBI:30616"/>
    </ligand>
</feature>
<sequence>MSASDLHPVQAGAPQGRRQILVTSALPYANGQIHIGHLVEYIQTDIWARTMRMHGHEIYYIGADDTHGTPVMLRAEQEGVSPKQLIERVWREHKRDFDSFGVSFDNFYTTDSDENRVLSEKIYLALKEAGFIAEREIEQAYDPVKQMFLPDRFIKGECPKCHAKDQYGDSCEVCGTTYQPTDLVNPYSVVSGATPVRKTSTHHFFRLSDPRCEAFLREWVSGLAQPEATNKMREWLGDAGEAKLADWDISRDAPYFGFEIPGAPGKYFYVWLDAPVGYYASFKNLCERRGLDFDAWISKDSTTEQYHFIGKDILYFHTLFWPAMLEFSGHRTPTNVFAHGFLTVDGAKMSKSRGTFITAQSYIDAGLNPEWLRYYFAAKLNATMEDIDLNLEDFQARVNSDLVGKYVNIASRAAGFLIKRFDGRVQASATNHPLLVTLRDAIPQIAAHYEAREYGRALRQTMELADAVNGYVDTAKPWELAKDPANAVALHETCTVSLEAFRLLSLALKPVLPRVAEGVEAFLGIAPLTWADANKPLSSEQPIRAYQHLMTRVDPKQIDALLAANRSSLQGAAAADAAGATNGNGAKAAKSAKAANAASADDEASPFISIDDFAKIDLRIAKIVACQAVEGSDKLLQLTLDVGEEKTRNVFSGIKSAYQPEQLVGKLTVMVANLAPRKMKFGLSEGMVLAASAADEKAEPGLYILEPHSGAKPGMRVK</sequence>
<keyword id="KW-0030">Aminoacyl-tRNA synthetase</keyword>
<keyword id="KW-0067">ATP-binding</keyword>
<keyword id="KW-0963">Cytoplasm</keyword>
<keyword id="KW-0436">Ligase</keyword>
<keyword id="KW-0479">Metal-binding</keyword>
<keyword id="KW-0547">Nucleotide-binding</keyword>
<keyword id="KW-0648">Protein biosynthesis</keyword>
<keyword id="KW-0694">RNA-binding</keyword>
<keyword id="KW-0820">tRNA-binding</keyword>
<keyword id="KW-0862">Zinc</keyword>
<dbReference type="EC" id="6.1.1.10" evidence="1"/>
<dbReference type="EMBL" id="CP000086">
    <property type="protein sequence ID" value="ABC38961.1"/>
    <property type="status" value="ALT_INIT"/>
    <property type="molecule type" value="Genomic_DNA"/>
</dbReference>
<dbReference type="RefSeq" id="WP_025369520.1">
    <property type="nucleotide sequence ID" value="NZ_CP008785.1"/>
</dbReference>
<dbReference type="SMR" id="Q2T087"/>
<dbReference type="GeneID" id="45120611"/>
<dbReference type="KEGG" id="bte:BTH_I0856"/>
<dbReference type="HOGENOM" id="CLU_009710_7_0_4"/>
<dbReference type="BRENDA" id="6.1.1.10">
    <property type="organism ID" value="8156"/>
</dbReference>
<dbReference type="Proteomes" id="UP000001930">
    <property type="component" value="Chromosome I"/>
</dbReference>
<dbReference type="GO" id="GO:0005829">
    <property type="term" value="C:cytosol"/>
    <property type="evidence" value="ECO:0007669"/>
    <property type="project" value="TreeGrafter"/>
</dbReference>
<dbReference type="GO" id="GO:0005524">
    <property type="term" value="F:ATP binding"/>
    <property type="evidence" value="ECO:0007669"/>
    <property type="project" value="UniProtKB-UniRule"/>
</dbReference>
<dbReference type="GO" id="GO:0046872">
    <property type="term" value="F:metal ion binding"/>
    <property type="evidence" value="ECO:0007669"/>
    <property type="project" value="UniProtKB-KW"/>
</dbReference>
<dbReference type="GO" id="GO:0004825">
    <property type="term" value="F:methionine-tRNA ligase activity"/>
    <property type="evidence" value="ECO:0007669"/>
    <property type="project" value="UniProtKB-UniRule"/>
</dbReference>
<dbReference type="GO" id="GO:0000049">
    <property type="term" value="F:tRNA binding"/>
    <property type="evidence" value="ECO:0007669"/>
    <property type="project" value="UniProtKB-KW"/>
</dbReference>
<dbReference type="GO" id="GO:0006431">
    <property type="term" value="P:methionyl-tRNA aminoacylation"/>
    <property type="evidence" value="ECO:0007669"/>
    <property type="project" value="UniProtKB-UniRule"/>
</dbReference>
<dbReference type="CDD" id="cd07957">
    <property type="entry name" value="Anticodon_Ia_Met"/>
    <property type="match status" value="1"/>
</dbReference>
<dbReference type="CDD" id="cd00814">
    <property type="entry name" value="MetRS_core"/>
    <property type="match status" value="1"/>
</dbReference>
<dbReference type="CDD" id="cd02800">
    <property type="entry name" value="tRNA_bind_EcMetRS_like"/>
    <property type="match status" value="1"/>
</dbReference>
<dbReference type="FunFam" id="2.20.28.20:FF:000001">
    <property type="entry name" value="Methionine--tRNA ligase"/>
    <property type="match status" value="1"/>
</dbReference>
<dbReference type="FunFam" id="2.40.50.140:FF:000042">
    <property type="entry name" value="Methionine--tRNA ligase"/>
    <property type="match status" value="1"/>
</dbReference>
<dbReference type="Gene3D" id="3.40.50.620">
    <property type="entry name" value="HUPs"/>
    <property type="match status" value="1"/>
</dbReference>
<dbReference type="Gene3D" id="1.10.730.10">
    <property type="entry name" value="Isoleucyl-tRNA Synthetase, Domain 1"/>
    <property type="match status" value="1"/>
</dbReference>
<dbReference type="Gene3D" id="2.20.28.20">
    <property type="entry name" value="Methionyl-tRNA synthetase, Zn-domain"/>
    <property type="match status" value="1"/>
</dbReference>
<dbReference type="Gene3D" id="2.40.50.140">
    <property type="entry name" value="Nucleic acid-binding proteins"/>
    <property type="match status" value="1"/>
</dbReference>
<dbReference type="HAMAP" id="MF_00098">
    <property type="entry name" value="Met_tRNA_synth_type1"/>
    <property type="match status" value="1"/>
</dbReference>
<dbReference type="InterPro" id="IPR001412">
    <property type="entry name" value="aa-tRNA-synth_I_CS"/>
</dbReference>
<dbReference type="InterPro" id="IPR041872">
    <property type="entry name" value="Anticodon_Met"/>
</dbReference>
<dbReference type="InterPro" id="IPR004495">
    <property type="entry name" value="Met-tRNA-synth_bsu_C"/>
</dbReference>
<dbReference type="InterPro" id="IPR023458">
    <property type="entry name" value="Met-tRNA_ligase_1"/>
</dbReference>
<dbReference type="InterPro" id="IPR014758">
    <property type="entry name" value="Met-tRNA_synth"/>
</dbReference>
<dbReference type="InterPro" id="IPR015413">
    <property type="entry name" value="Methionyl/Leucyl_tRNA_Synth"/>
</dbReference>
<dbReference type="InterPro" id="IPR033911">
    <property type="entry name" value="MetRS_core"/>
</dbReference>
<dbReference type="InterPro" id="IPR029038">
    <property type="entry name" value="MetRS_Zn"/>
</dbReference>
<dbReference type="InterPro" id="IPR012340">
    <property type="entry name" value="NA-bd_OB-fold"/>
</dbReference>
<dbReference type="InterPro" id="IPR014729">
    <property type="entry name" value="Rossmann-like_a/b/a_fold"/>
</dbReference>
<dbReference type="InterPro" id="IPR002547">
    <property type="entry name" value="tRNA-bd_dom"/>
</dbReference>
<dbReference type="InterPro" id="IPR009080">
    <property type="entry name" value="tRNAsynth_Ia_anticodon-bd"/>
</dbReference>
<dbReference type="NCBIfam" id="TIGR00398">
    <property type="entry name" value="metG"/>
    <property type="match status" value="1"/>
</dbReference>
<dbReference type="NCBIfam" id="TIGR00399">
    <property type="entry name" value="metG_C_term"/>
    <property type="match status" value="1"/>
</dbReference>
<dbReference type="NCBIfam" id="NF001100">
    <property type="entry name" value="PRK00133.1"/>
    <property type="match status" value="1"/>
</dbReference>
<dbReference type="PANTHER" id="PTHR45765">
    <property type="entry name" value="METHIONINE--TRNA LIGASE"/>
    <property type="match status" value="1"/>
</dbReference>
<dbReference type="PANTHER" id="PTHR45765:SF1">
    <property type="entry name" value="METHIONINE--TRNA LIGASE, CYTOPLASMIC"/>
    <property type="match status" value="1"/>
</dbReference>
<dbReference type="Pfam" id="PF19303">
    <property type="entry name" value="Anticodon_3"/>
    <property type="match status" value="1"/>
</dbReference>
<dbReference type="Pfam" id="PF09334">
    <property type="entry name" value="tRNA-synt_1g"/>
    <property type="match status" value="1"/>
</dbReference>
<dbReference type="Pfam" id="PF01588">
    <property type="entry name" value="tRNA_bind"/>
    <property type="match status" value="1"/>
</dbReference>
<dbReference type="PRINTS" id="PR01041">
    <property type="entry name" value="TRNASYNTHMET"/>
</dbReference>
<dbReference type="SUPFAM" id="SSF47323">
    <property type="entry name" value="Anticodon-binding domain of a subclass of class I aminoacyl-tRNA synthetases"/>
    <property type="match status" value="1"/>
</dbReference>
<dbReference type="SUPFAM" id="SSF57770">
    <property type="entry name" value="Methionyl-tRNA synthetase (MetRS), Zn-domain"/>
    <property type="match status" value="1"/>
</dbReference>
<dbReference type="SUPFAM" id="SSF50249">
    <property type="entry name" value="Nucleic acid-binding proteins"/>
    <property type="match status" value="1"/>
</dbReference>
<dbReference type="SUPFAM" id="SSF52374">
    <property type="entry name" value="Nucleotidylyl transferase"/>
    <property type="match status" value="1"/>
</dbReference>
<dbReference type="PROSITE" id="PS00178">
    <property type="entry name" value="AA_TRNA_LIGASE_I"/>
    <property type="match status" value="1"/>
</dbReference>
<dbReference type="PROSITE" id="PS50886">
    <property type="entry name" value="TRBD"/>
    <property type="match status" value="1"/>
</dbReference>
<reference key="1">
    <citation type="journal article" date="2005" name="BMC Genomics">
        <title>Bacterial genome adaptation to niches: divergence of the potential virulence genes in three Burkholderia species of different survival strategies.</title>
        <authorList>
            <person name="Kim H.S."/>
            <person name="Schell M.A."/>
            <person name="Yu Y."/>
            <person name="Ulrich R.L."/>
            <person name="Sarria S.H."/>
            <person name="Nierman W.C."/>
            <person name="DeShazer D."/>
        </authorList>
    </citation>
    <scope>NUCLEOTIDE SEQUENCE [LARGE SCALE GENOMIC DNA]</scope>
    <source>
        <strain>ATCC 700388 / DSM 13276 / CCUG 48851 / CIP 106301 / E264</strain>
    </source>
</reference>
<organism>
    <name type="scientific">Burkholderia thailandensis (strain ATCC 700388 / DSM 13276 / CCUG 48851 / CIP 106301 / E264)</name>
    <dbReference type="NCBI Taxonomy" id="271848"/>
    <lineage>
        <taxon>Bacteria</taxon>
        <taxon>Pseudomonadati</taxon>
        <taxon>Pseudomonadota</taxon>
        <taxon>Betaproteobacteria</taxon>
        <taxon>Burkholderiales</taxon>
        <taxon>Burkholderiaceae</taxon>
        <taxon>Burkholderia</taxon>
        <taxon>pseudomallei group</taxon>
    </lineage>
</organism>